<protein>
    <recommendedName>
        <fullName>Alkyl hydroperoxide reductase C</fullName>
        <ecNumber evidence="1">1.11.1.26</ecNumber>
    </recommendedName>
    <alternativeName>
        <fullName>General stress protein 22</fullName>
    </alternativeName>
    <alternativeName>
        <fullName>Peroxiredoxin</fullName>
    </alternativeName>
    <alternativeName>
        <fullName>Thioredoxin peroxidase</fullName>
    </alternativeName>
</protein>
<proteinExistence type="evidence at protein level"/>
<accession>P80239</accession>
<accession>P53562</accession>
<keyword id="KW-0049">Antioxidant</keyword>
<keyword id="KW-0963">Cytoplasm</keyword>
<keyword id="KW-0903">Direct protein sequencing</keyword>
<keyword id="KW-1015">Disulfide bond</keyword>
<keyword id="KW-0560">Oxidoreductase</keyword>
<keyword id="KW-0575">Peroxidase</keyword>
<keyword id="KW-0676">Redox-active center</keyword>
<keyword id="KW-1185">Reference proteome</keyword>
<keyword id="KW-0346">Stress response</keyword>
<reference key="1">
    <citation type="journal article" date="1997" name="DNA Res.">
        <title>Sequence analysis of the 36-kb region between gntZ and trnY genes of Bacillus subtilis genome.</title>
        <authorList>
            <person name="Kasahara Y."/>
            <person name="Nakai S."/>
            <person name="Ogasawara N."/>
        </authorList>
    </citation>
    <scope>NUCLEOTIDE SEQUENCE [GENOMIC DNA]</scope>
    <source>
        <strain>168</strain>
    </source>
</reference>
<reference key="2">
    <citation type="journal article" date="1997" name="Nature">
        <title>The complete genome sequence of the Gram-positive bacterium Bacillus subtilis.</title>
        <authorList>
            <person name="Kunst F."/>
            <person name="Ogasawara N."/>
            <person name="Moszer I."/>
            <person name="Albertini A.M."/>
            <person name="Alloni G."/>
            <person name="Azevedo V."/>
            <person name="Bertero M.G."/>
            <person name="Bessieres P."/>
            <person name="Bolotin A."/>
            <person name="Borchert S."/>
            <person name="Borriss R."/>
            <person name="Boursier L."/>
            <person name="Brans A."/>
            <person name="Braun M."/>
            <person name="Brignell S.C."/>
            <person name="Bron S."/>
            <person name="Brouillet S."/>
            <person name="Bruschi C.V."/>
            <person name="Caldwell B."/>
            <person name="Capuano V."/>
            <person name="Carter N.M."/>
            <person name="Choi S.-K."/>
            <person name="Codani J.-J."/>
            <person name="Connerton I.F."/>
            <person name="Cummings N.J."/>
            <person name="Daniel R.A."/>
            <person name="Denizot F."/>
            <person name="Devine K.M."/>
            <person name="Duesterhoeft A."/>
            <person name="Ehrlich S.D."/>
            <person name="Emmerson P.T."/>
            <person name="Entian K.-D."/>
            <person name="Errington J."/>
            <person name="Fabret C."/>
            <person name="Ferrari E."/>
            <person name="Foulger D."/>
            <person name="Fritz C."/>
            <person name="Fujita M."/>
            <person name="Fujita Y."/>
            <person name="Fuma S."/>
            <person name="Galizzi A."/>
            <person name="Galleron N."/>
            <person name="Ghim S.-Y."/>
            <person name="Glaser P."/>
            <person name="Goffeau A."/>
            <person name="Golightly E.J."/>
            <person name="Grandi G."/>
            <person name="Guiseppi G."/>
            <person name="Guy B.J."/>
            <person name="Haga K."/>
            <person name="Haiech J."/>
            <person name="Harwood C.R."/>
            <person name="Henaut A."/>
            <person name="Hilbert H."/>
            <person name="Holsappel S."/>
            <person name="Hosono S."/>
            <person name="Hullo M.-F."/>
            <person name="Itaya M."/>
            <person name="Jones L.-M."/>
            <person name="Joris B."/>
            <person name="Karamata D."/>
            <person name="Kasahara Y."/>
            <person name="Klaerr-Blanchard M."/>
            <person name="Klein C."/>
            <person name="Kobayashi Y."/>
            <person name="Koetter P."/>
            <person name="Koningstein G."/>
            <person name="Krogh S."/>
            <person name="Kumano M."/>
            <person name="Kurita K."/>
            <person name="Lapidus A."/>
            <person name="Lardinois S."/>
            <person name="Lauber J."/>
            <person name="Lazarevic V."/>
            <person name="Lee S.-M."/>
            <person name="Levine A."/>
            <person name="Liu H."/>
            <person name="Masuda S."/>
            <person name="Mauel C."/>
            <person name="Medigue C."/>
            <person name="Medina N."/>
            <person name="Mellado R.P."/>
            <person name="Mizuno M."/>
            <person name="Moestl D."/>
            <person name="Nakai S."/>
            <person name="Noback M."/>
            <person name="Noone D."/>
            <person name="O'Reilly M."/>
            <person name="Ogawa K."/>
            <person name="Ogiwara A."/>
            <person name="Oudega B."/>
            <person name="Park S.-H."/>
            <person name="Parro V."/>
            <person name="Pohl T.M."/>
            <person name="Portetelle D."/>
            <person name="Porwollik S."/>
            <person name="Prescott A.M."/>
            <person name="Presecan E."/>
            <person name="Pujic P."/>
            <person name="Purnelle B."/>
            <person name="Rapoport G."/>
            <person name="Rey M."/>
            <person name="Reynolds S."/>
            <person name="Rieger M."/>
            <person name="Rivolta C."/>
            <person name="Rocha E."/>
            <person name="Roche B."/>
            <person name="Rose M."/>
            <person name="Sadaie Y."/>
            <person name="Sato T."/>
            <person name="Scanlan E."/>
            <person name="Schleich S."/>
            <person name="Schroeter R."/>
            <person name="Scoffone F."/>
            <person name="Sekiguchi J."/>
            <person name="Sekowska A."/>
            <person name="Seror S.J."/>
            <person name="Serror P."/>
            <person name="Shin B.-S."/>
            <person name="Soldo B."/>
            <person name="Sorokin A."/>
            <person name="Tacconi E."/>
            <person name="Takagi T."/>
            <person name="Takahashi H."/>
            <person name="Takemaru K."/>
            <person name="Takeuchi M."/>
            <person name="Tamakoshi A."/>
            <person name="Tanaka T."/>
            <person name="Terpstra P."/>
            <person name="Tognoni A."/>
            <person name="Tosato V."/>
            <person name="Uchiyama S."/>
            <person name="Vandenbol M."/>
            <person name="Vannier F."/>
            <person name="Vassarotti A."/>
            <person name="Viari A."/>
            <person name="Wambutt R."/>
            <person name="Wedler E."/>
            <person name="Wedler H."/>
            <person name="Weitzenegger T."/>
            <person name="Winters P."/>
            <person name="Wipat A."/>
            <person name="Yamamoto H."/>
            <person name="Yamane K."/>
            <person name="Yasumoto K."/>
            <person name="Yata K."/>
            <person name="Yoshida K."/>
            <person name="Yoshikawa H.-F."/>
            <person name="Zumstein E."/>
            <person name="Yoshikawa H."/>
            <person name="Danchin A."/>
        </authorList>
    </citation>
    <scope>NUCLEOTIDE SEQUENCE [LARGE SCALE GENOMIC DNA]</scope>
    <source>
        <strain>168</strain>
    </source>
</reference>
<reference key="3">
    <citation type="journal article" date="1994" name="Microbiology">
        <title>Isolation and characterization of a hydrogen peroxide resistant mutant of Bacillus subtilis.</title>
        <authorList>
            <person name="Hartford O.M."/>
            <person name="Dowds B.C.A."/>
        </authorList>
    </citation>
    <scope>PROTEIN SEQUENCE OF 1-41</scope>
    <source>
        <strain>168 / YB886 / BG214</strain>
    </source>
</reference>
<reference key="4">
    <citation type="journal article" date="1994" name="Microbiology">
        <title>Analysis of the induction of general stress proteins of Bacillus subtilis.</title>
        <authorList>
            <person name="Voelker U."/>
            <person name="Engelmann S."/>
            <person name="Maul B."/>
            <person name="Riethdorf S."/>
            <person name="Voelker A."/>
            <person name="Schmid R."/>
            <person name="Mach H."/>
            <person name="Hecker M."/>
        </authorList>
    </citation>
    <scope>PROTEIN SEQUENCE OF 1-14</scope>
    <source>
        <strain>168 / IS58</strain>
    </source>
</reference>
<comment type="function">
    <text evidence="1">Thiol-specific peroxidase that catalyzes the reduction of hydrogen peroxide and organic hydroperoxides to water and alcohols, respectively. Plays a role in cell protection against oxidative stress by detoxifying peroxides.</text>
</comment>
<comment type="catalytic activity">
    <reaction evidence="1">
        <text>a hydroperoxide + NADH + H(+) = an alcohol + NAD(+) + H2O</text>
        <dbReference type="Rhea" id="RHEA:62628"/>
        <dbReference type="ChEBI" id="CHEBI:15377"/>
        <dbReference type="ChEBI" id="CHEBI:15378"/>
        <dbReference type="ChEBI" id="CHEBI:30879"/>
        <dbReference type="ChEBI" id="CHEBI:35924"/>
        <dbReference type="ChEBI" id="CHEBI:57540"/>
        <dbReference type="ChEBI" id="CHEBI:57945"/>
        <dbReference type="EC" id="1.11.1.26"/>
    </reaction>
</comment>
<comment type="subunit">
    <text evidence="1">Homodimer; disulfide-linked, upon oxidation. 5 homodimers assemble to form a ring-like decamer.</text>
</comment>
<comment type="subcellular location">
    <subcellularLocation>
        <location evidence="2">Cytoplasm</location>
    </subcellularLocation>
</comment>
<comment type="induction">
    <text evidence="4">By heat shock, salt stress, oxidative stress and glucose limitation.</text>
</comment>
<comment type="miscellaneous">
    <text evidence="1">The active site is a conserved redox-active cysteine residue, the peroxidatic cysteine (C(P)), which makes the nucleophilic attack on the peroxide substrate. The peroxide oxidizes the C(P)-SH to cysteine sulfenic acid (C(P)-SOH), which then reacts with another cysteine residue, the resolving cysteine (C(R)), to form a disulfide bridge. The disulfide is subsequently reduced by an appropriate electron donor to complete the catalytic cycle. In this typical 2-Cys peroxiredoxin, C(R) is provided by the other dimeric subunit to form an intersubunit disulfide. The disulfide is subsequently reduced by AhpF.</text>
</comment>
<comment type="similarity">
    <text evidence="5">Belongs to the peroxiredoxin family. AhpC/Prx1 subfamily.</text>
</comment>
<sequence length="187" mass="20627">MSLIGKEVLPFEAKAFKNGEFIDVTNEDLKGQWSVFCFYPADFSFVCPTELEDLQEQYAALKELGVEVYSVSTDTHFVHKGWHDSSEKISKITYAMIGDPSQTISRNFDVLDEETGLADRGTFIIDPDGVIQTVEINAGGIGRDASNLVNKVKAAQYVRQNPGEVCPAKWEEGGETLTPSLDLVGKI</sequence>
<name>AHPC_BACSU</name>
<dbReference type="EC" id="1.11.1.26" evidence="1"/>
<dbReference type="EMBL" id="D78193">
    <property type="protein sequence ID" value="BAA11268.1"/>
    <property type="molecule type" value="Genomic_DNA"/>
</dbReference>
<dbReference type="EMBL" id="AL009126">
    <property type="protein sequence ID" value="CAB16046.1"/>
    <property type="molecule type" value="Genomic_DNA"/>
</dbReference>
<dbReference type="PIR" id="F69583">
    <property type="entry name" value="F69583"/>
</dbReference>
<dbReference type="RefSeq" id="NP_391889.1">
    <property type="nucleotide sequence ID" value="NC_000964.3"/>
</dbReference>
<dbReference type="RefSeq" id="WP_003243686.1">
    <property type="nucleotide sequence ID" value="NZ_OZ025638.1"/>
</dbReference>
<dbReference type="SMR" id="P80239"/>
<dbReference type="FunCoup" id="P80239">
    <property type="interactions" value="32"/>
</dbReference>
<dbReference type="IntAct" id="P80239">
    <property type="interactions" value="1"/>
</dbReference>
<dbReference type="MINT" id="P80239"/>
<dbReference type="STRING" id="224308.BSU40090"/>
<dbReference type="PeroxiBase" id="4904">
    <property type="entry name" value="BsAhpC"/>
</dbReference>
<dbReference type="jPOST" id="P80239"/>
<dbReference type="PaxDb" id="224308-BSU40090"/>
<dbReference type="EnsemblBacteria" id="CAB16046">
    <property type="protein sequence ID" value="CAB16046"/>
    <property type="gene ID" value="BSU_40090"/>
</dbReference>
<dbReference type="GeneID" id="938147"/>
<dbReference type="KEGG" id="bsu:BSU40090"/>
<dbReference type="PATRIC" id="fig|224308.179.peg.4336"/>
<dbReference type="eggNOG" id="COG0450">
    <property type="taxonomic scope" value="Bacteria"/>
</dbReference>
<dbReference type="InParanoid" id="P80239"/>
<dbReference type="OrthoDB" id="9812811at2"/>
<dbReference type="PhylomeDB" id="P80239"/>
<dbReference type="BioCyc" id="BSUB:BSU40090-MONOMER"/>
<dbReference type="Proteomes" id="UP000001570">
    <property type="component" value="Chromosome"/>
</dbReference>
<dbReference type="GO" id="GO:0005829">
    <property type="term" value="C:cytosol"/>
    <property type="evidence" value="ECO:0000318"/>
    <property type="project" value="GO_Central"/>
</dbReference>
<dbReference type="GO" id="GO:0102039">
    <property type="term" value="F:NADH-dependent peroxiredoxin activity"/>
    <property type="evidence" value="ECO:0007669"/>
    <property type="project" value="UniProtKB-EC"/>
</dbReference>
<dbReference type="GO" id="GO:0008379">
    <property type="term" value="F:thioredoxin peroxidase activity"/>
    <property type="evidence" value="ECO:0000318"/>
    <property type="project" value="GO_Central"/>
</dbReference>
<dbReference type="GO" id="GO:0045454">
    <property type="term" value="P:cell redox homeostasis"/>
    <property type="evidence" value="ECO:0000318"/>
    <property type="project" value="GO_Central"/>
</dbReference>
<dbReference type="GO" id="GO:0042744">
    <property type="term" value="P:hydrogen peroxide catabolic process"/>
    <property type="evidence" value="ECO:0000318"/>
    <property type="project" value="GO_Central"/>
</dbReference>
<dbReference type="GO" id="GO:0006979">
    <property type="term" value="P:response to oxidative stress"/>
    <property type="evidence" value="ECO:0000318"/>
    <property type="project" value="GO_Central"/>
</dbReference>
<dbReference type="CDD" id="cd03015">
    <property type="entry name" value="PRX_Typ2cys"/>
    <property type="match status" value="1"/>
</dbReference>
<dbReference type="FunFam" id="3.40.30.10:FF:000002">
    <property type="entry name" value="Alkyl hydroperoxide reductase C"/>
    <property type="match status" value="1"/>
</dbReference>
<dbReference type="Gene3D" id="3.40.30.10">
    <property type="entry name" value="Glutaredoxin"/>
    <property type="match status" value="1"/>
</dbReference>
<dbReference type="InterPro" id="IPR017559">
    <property type="entry name" value="AhpC"/>
</dbReference>
<dbReference type="InterPro" id="IPR000866">
    <property type="entry name" value="AhpC/TSA"/>
</dbReference>
<dbReference type="InterPro" id="IPR050217">
    <property type="entry name" value="Peroxiredoxin"/>
</dbReference>
<dbReference type="InterPro" id="IPR024706">
    <property type="entry name" value="Peroxiredoxin_AhpC-typ"/>
</dbReference>
<dbReference type="InterPro" id="IPR019479">
    <property type="entry name" value="Peroxiredoxin_C"/>
</dbReference>
<dbReference type="InterPro" id="IPR036249">
    <property type="entry name" value="Thioredoxin-like_sf"/>
</dbReference>
<dbReference type="InterPro" id="IPR013766">
    <property type="entry name" value="Thioredoxin_domain"/>
</dbReference>
<dbReference type="NCBIfam" id="TIGR03137">
    <property type="entry name" value="AhpC"/>
    <property type="match status" value="1"/>
</dbReference>
<dbReference type="PANTHER" id="PTHR10681:SF121">
    <property type="entry name" value="ALKYL HYDROPEROXIDE REDUCTASE C"/>
    <property type="match status" value="1"/>
</dbReference>
<dbReference type="PANTHER" id="PTHR10681">
    <property type="entry name" value="THIOREDOXIN PEROXIDASE"/>
    <property type="match status" value="1"/>
</dbReference>
<dbReference type="Pfam" id="PF10417">
    <property type="entry name" value="1-cysPrx_C"/>
    <property type="match status" value="1"/>
</dbReference>
<dbReference type="Pfam" id="PF00578">
    <property type="entry name" value="AhpC-TSA"/>
    <property type="match status" value="1"/>
</dbReference>
<dbReference type="PIRSF" id="PIRSF000239">
    <property type="entry name" value="AHPC"/>
    <property type="match status" value="1"/>
</dbReference>
<dbReference type="SUPFAM" id="SSF52833">
    <property type="entry name" value="Thioredoxin-like"/>
    <property type="match status" value="1"/>
</dbReference>
<dbReference type="PROSITE" id="PS51352">
    <property type="entry name" value="THIOREDOXIN_2"/>
    <property type="match status" value="1"/>
</dbReference>
<organism>
    <name type="scientific">Bacillus subtilis (strain 168)</name>
    <dbReference type="NCBI Taxonomy" id="224308"/>
    <lineage>
        <taxon>Bacteria</taxon>
        <taxon>Bacillati</taxon>
        <taxon>Bacillota</taxon>
        <taxon>Bacilli</taxon>
        <taxon>Bacillales</taxon>
        <taxon>Bacillaceae</taxon>
        <taxon>Bacillus</taxon>
    </lineage>
</organism>
<evidence type="ECO:0000250" key="1">
    <source>
        <dbReference type="UniProtKB" id="P0A251"/>
    </source>
</evidence>
<evidence type="ECO:0000250" key="2">
    <source>
        <dbReference type="UniProtKB" id="P0AE08"/>
    </source>
</evidence>
<evidence type="ECO:0000255" key="3">
    <source>
        <dbReference type="PROSITE-ProRule" id="PRU00691"/>
    </source>
</evidence>
<evidence type="ECO:0000269" key="4">
    <source>
    </source>
</evidence>
<evidence type="ECO:0000305" key="5"/>
<feature type="chain" id="PRO_0000135113" description="Alkyl hydroperoxide reductase C">
    <location>
        <begin position="1"/>
        <end position="187"/>
    </location>
</feature>
<feature type="domain" description="Thioredoxin" evidence="3">
    <location>
        <begin position="2"/>
        <end position="157"/>
    </location>
</feature>
<feature type="active site" description="Cysteine sulfenic acid (-SOH) intermediate" evidence="1">
    <location>
        <position position="47"/>
    </location>
</feature>
<feature type="disulfide bond" description="Interchain (with C-166); in linked form" evidence="1">
    <location>
        <position position="47"/>
    </location>
</feature>
<feature type="disulfide bond" description="Interchain (with C-47); in linked form" evidence="1">
    <location>
        <position position="166"/>
    </location>
</feature>
<feature type="sequence conflict" description="In Ref. 4; AA sequence." evidence="5" ref="4">
    <location>
        <position position="2"/>
    </location>
</feature>
<feature type="sequence conflict" description="In Ref. 4; AA sequence." evidence="5" ref="4">
    <original>V</original>
    <variation>VV</variation>
    <location>
        <position position="8"/>
    </location>
</feature>
<gene>
    <name type="primary">ahpC</name>
    <name type="ordered locus">BSU40090</name>
</gene>